<accession>B1LJV1</accession>
<keyword id="KW-0233">DNA recombination</keyword>
<keyword id="KW-0238">DNA-binding</keyword>
<keyword id="KW-0804">Transcription</keyword>
<keyword id="KW-0805">Transcription regulation</keyword>
<keyword id="KW-0810">Translation regulation</keyword>
<proteinExistence type="inferred from homology"/>
<sequence>MTKSELIERLATQQSHIPAKTVEDAVKEMLEHMASTLAQGERIEIRGFGSFSLHYRAPRTGRNPKTGDKVELEGKYVPHFKPGKELRDRANIYG</sequence>
<organism>
    <name type="scientific">Escherichia coli (strain SMS-3-5 / SECEC)</name>
    <dbReference type="NCBI Taxonomy" id="439855"/>
    <lineage>
        <taxon>Bacteria</taxon>
        <taxon>Pseudomonadati</taxon>
        <taxon>Pseudomonadota</taxon>
        <taxon>Gammaproteobacteria</taxon>
        <taxon>Enterobacterales</taxon>
        <taxon>Enterobacteriaceae</taxon>
        <taxon>Escherichia</taxon>
    </lineage>
</organism>
<evidence type="ECO:0000255" key="1">
    <source>
        <dbReference type="HAMAP-Rule" id="MF_00381"/>
    </source>
</evidence>
<protein>
    <recommendedName>
        <fullName evidence="1">Integration host factor subunit beta</fullName>
        <shortName evidence="1">IHF-beta</shortName>
    </recommendedName>
</protein>
<reference key="1">
    <citation type="journal article" date="2008" name="J. Bacteriol.">
        <title>Insights into the environmental resistance gene pool from the genome sequence of the multidrug-resistant environmental isolate Escherichia coli SMS-3-5.</title>
        <authorList>
            <person name="Fricke W.F."/>
            <person name="Wright M.S."/>
            <person name="Lindell A.H."/>
            <person name="Harkins D.M."/>
            <person name="Baker-Austin C."/>
            <person name="Ravel J."/>
            <person name="Stepanauskas R."/>
        </authorList>
    </citation>
    <scope>NUCLEOTIDE SEQUENCE [LARGE SCALE GENOMIC DNA]</scope>
    <source>
        <strain>SMS-3-5 / SECEC</strain>
    </source>
</reference>
<feature type="chain" id="PRO_1000122216" description="Integration host factor subunit beta">
    <location>
        <begin position="1"/>
        <end position="94"/>
    </location>
</feature>
<gene>
    <name evidence="1" type="primary">ihfB</name>
    <name evidence="1" type="synonym">himD</name>
    <name type="ordered locus">EcSMS35_2208</name>
</gene>
<dbReference type="EMBL" id="CP000970">
    <property type="protein sequence ID" value="ACB19128.1"/>
    <property type="molecule type" value="Genomic_DNA"/>
</dbReference>
<dbReference type="RefSeq" id="WP_000167336.1">
    <property type="nucleotide sequence ID" value="NC_010498.1"/>
</dbReference>
<dbReference type="SMR" id="B1LJV1"/>
<dbReference type="GeneID" id="93776505"/>
<dbReference type="KEGG" id="ecm:EcSMS35_2208"/>
<dbReference type="HOGENOM" id="CLU_105066_2_0_6"/>
<dbReference type="Proteomes" id="UP000007011">
    <property type="component" value="Chromosome"/>
</dbReference>
<dbReference type="GO" id="GO:0005694">
    <property type="term" value="C:chromosome"/>
    <property type="evidence" value="ECO:0007669"/>
    <property type="project" value="InterPro"/>
</dbReference>
<dbReference type="GO" id="GO:0005829">
    <property type="term" value="C:cytosol"/>
    <property type="evidence" value="ECO:0007669"/>
    <property type="project" value="TreeGrafter"/>
</dbReference>
<dbReference type="GO" id="GO:0003677">
    <property type="term" value="F:DNA binding"/>
    <property type="evidence" value="ECO:0007669"/>
    <property type="project" value="UniProtKB-UniRule"/>
</dbReference>
<dbReference type="GO" id="GO:0030527">
    <property type="term" value="F:structural constituent of chromatin"/>
    <property type="evidence" value="ECO:0007669"/>
    <property type="project" value="InterPro"/>
</dbReference>
<dbReference type="GO" id="GO:0006310">
    <property type="term" value="P:DNA recombination"/>
    <property type="evidence" value="ECO:0007669"/>
    <property type="project" value="UniProtKB-UniRule"/>
</dbReference>
<dbReference type="GO" id="GO:0006355">
    <property type="term" value="P:regulation of DNA-templated transcription"/>
    <property type="evidence" value="ECO:0007669"/>
    <property type="project" value="UniProtKB-UniRule"/>
</dbReference>
<dbReference type="GO" id="GO:0006417">
    <property type="term" value="P:regulation of translation"/>
    <property type="evidence" value="ECO:0007669"/>
    <property type="project" value="UniProtKB-UniRule"/>
</dbReference>
<dbReference type="CDD" id="cd13836">
    <property type="entry name" value="IHF_B"/>
    <property type="match status" value="1"/>
</dbReference>
<dbReference type="FunFam" id="4.10.520.10:FF:000003">
    <property type="entry name" value="Integration host factor subunit beta"/>
    <property type="match status" value="1"/>
</dbReference>
<dbReference type="Gene3D" id="4.10.520.10">
    <property type="entry name" value="IHF-like DNA-binding proteins"/>
    <property type="match status" value="1"/>
</dbReference>
<dbReference type="HAMAP" id="MF_00381">
    <property type="entry name" value="IHF_beta"/>
    <property type="match status" value="1"/>
</dbReference>
<dbReference type="InterPro" id="IPR000119">
    <property type="entry name" value="Hist_DNA-bd"/>
</dbReference>
<dbReference type="InterPro" id="IPR020816">
    <property type="entry name" value="Histone-like_DNA-bd_CS"/>
</dbReference>
<dbReference type="InterPro" id="IPR010992">
    <property type="entry name" value="IHF-like_DNA-bd_dom_sf"/>
</dbReference>
<dbReference type="InterPro" id="IPR005685">
    <property type="entry name" value="IHF_beta"/>
</dbReference>
<dbReference type="NCBIfam" id="TIGR00988">
    <property type="entry name" value="hip"/>
    <property type="match status" value="1"/>
</dbReference>
<dbReference type="NCBIfam" id="NF001222">
    <property type="entry name" value="PRK00199.1"/>
    <property type="match status" value="1"/>
</dbReference>
<dbReference type="PANTHER" id="PTHR33175">
    <property type="entry name" value="DNA-BINDING PROTEIN HU"/>
    <property type="match status" value="1"/>
</dbReference>
<dbReference type="PANTHER" id="PTHR33175:SF5">
    <property type="entry name" value="INTEGRATION HOST FACTOR SUBUNIT BETA"/>
    <property type="match status" value="1"/>
</dbReference>
<dbReference type="Pfam" id="PF00216">
    <property type="entry name" value="Bac_DNA_binding"/>
    <property type="match status" value="1"/>
</dbReference>
<dbReference type="PRINTS" id="PR01727">
    <property type="entry name" value="DNABINDINGHU"/>
</dbReference>
<dbReference type="SMART" id="SM00411">
    <property type="entry name" value="BHL"/>
    <property type="match status" value="1"/>
</dbReference>
<dbReference type="SUPFAM" id="SSF47729">
    <property type="entry name" value="IHF-like DNA-binding proteins"/>
    <property type="match status" value="1"/>
</dbReference>
<dbReference type="PROSITE" id="PS00045">
    <property type="entry name" value="HISTONE_LIKE"/>
    <property type="match status" value="1"/>
</dbReference>
<name>IHFB_ECOSM</name>
<comment type="function">
    <text evidence="1">This protein is one of the two subunits of integration host factor, a specific DNA-binding protein that functions in genetic recombination as well as in transcriptional and translational control.</text>
</comment>
<comment type="subunit">
    <text evidence="1">Heterodimer of an alpha and a beta chain.</text>
</comment>
<comment type="similarity">
    <text evidence="1">Belongs to the bacterial histone-like protein family.</text>
</comment>